<comment type="function">
    <text evidence="1">Catalyzes the ATP-dependent phosphorylation of N-acetyl-L-glutamate.</text>
</comment>
<comment type="catalytic activity">
    <reaction evidence="1">
        <text>N-acetyl-L-glutamate + ATP = N-acetyl-L-glutamyl 5-phosphate + ADP</text>
        <dbReference type="Rhea" id="RHEA:14629"/>
        <dbReference type="ChEBI" id="CHEBI:30616"/>
        <dbReference type="ChEBI" id="CHEBI:44337"/>
        <dbReference type="ChEBI" id="CHEBI:57936"/>
        <dbReference type="ChEBI" id="CHEBI:456216"/>
        <dbReference type="EC" id="2.7.2.8"/>
    </reaction>
</comment>
<comment type="pathway">
    <text evidence="1">Amino-acid biosynthesis; L-arginine biosynthesis; N(2)-acetyl-L-ornithine from L-glutamate: step 2/4.</text>
</comment>
<comment type="subcellular location">
    <subcellularLocation>
        <location evidence="1">Cytoplasm</location>
    </subcellularLocation>
</comment>
<comment type="similarity">
    <text evidence="1">Belongs to the acetylglutamate kinase family. ArgB subfamily.</text>
</comment>
<proteinExistence type="inferred from homology"/>
<sequence length="298" mass="31386">MPDDSRISPLDQARILSEALPHMQRYDEETIVIKYGGHAMGSENVARQFASDIVLLEQTAINPVVVHGGGPQIAAMLQRLGIKSEFAAGLRITDAATIEIVEMVLAGSINKQLVGYINEAGGKAVGLCGKDGNMVTAAKATRMLADPDSNIEKVVDLGFVGEPEKVDLTLLNQLIGHELIPVLAPLATSKGGQTFNVNADIFAGAVAGALKAKRLLLLTDVPGVLDKSKKLIPELSISDARKLIADGTISGGMIPKVETCIYALEQGVSGVVIIDGKTPHAVLLELFTNQGTGTLIHK</sequence>
<gene>
    <name evidence="1" type="primary">argB</name>
    <name type="ordered locus">Nwi_3071</name>
</gene>
<protein>
    <recommendedName>
        <fullName evidence="1">Acetylglutamate kinase</fullName>
        <ecNumber evidence="1">2.7.2.8</ecNumber>
    </recommendedName>
    <alternativeName>
        <fullName evidence="1">N-acetyl-L-glutamate 5-phosphotransferase</fullName>
    </alternativeName>
    <alternativeName>
        <fullName evidence="1">NAG kinase</fullName>
        <shortName evidence="1">NAGK</shortName>
    </alternativeName>
</protein>
<feature type="chain" id="PRO_0000264724" description="Acetylglutamate kinase">
    <location>
        <begin position="1"/>
        <end position="298"/>
    </location>
</feature>
<feature type="binding site" evidence="1">
    <location>
        <begin position="69"/>
        <end position="70"/>
    </location>
    <ligand>
        <name>substrate</name>
    </ligand>
</feature>
<feature type="binding site" evidence="1">
    <location>
        <position position="91"/>
    </location>
    <ligand>
        <name>substrate</name>
    </ligand>
</feature>
<feature type="binding site" evidence="1">
    <location>
        <position position="196"/>
    </location>
    <ligand>
        <name>substrate</name>
    </ligand>
</feature>
<feature type="site" description="Transition state stabilizer" evidence="1">
    <location>
        <position position="34"/>
    </location>
</feature>
<feature type="site" description="Transition state stabilizer" evidence="1">
    <location>
        <position position="256"/>
    </location>
</feature>
<keyword id="KW-0028">Amino-acid biosynthesis</keyword>
<keyword id="KW-0055">Arginine biosynthesis</keyword>
<keyword id="KW-0067">ATP-binding</keyword>
<keyword id="KW-0963">Cytoplasm</keyword>
<keyword id="KW-0418">Kinase</keyword>
<keyword id="KW-0547">Nucleotide-binding</keyword>
<keyword id="KW-1185">Reference proteome</keyword>
<keyword id="KW-0808">Transferase</keyword>
<name>ARGB_NITWN</name>
<accession>Q3SN22</accession>
<organism>
    <name type="scientific">Nitrobacter winogradskyi (strain ATCC 25391 / DSM 10237 / CIP 104748 / NCIMB 11846 / Nb-255)</name>
    <dbReference type="NCBI Taxonomy" id="323098"/>
    <lineage>
        <taxon>Bacteria</taxon>
        <taxon>Pseudomonadati</taxon>
        <taxon>Pseudomonadota</taxon>
        <taxon>Alphaproteobacteria</taxon>
        <taxon>Hyphomicrobiales</taxon>
        <taxon>Nitrobacteraceae</taxon>
        <taxon>Nitrobacter</taxon>
    </lineage>
</organism>
<dbReference type="EC" id="2.7.2.8" evidence="1"/>
<dbReference type="EMBL" id="CP000115">
    <property type="protein sequence ID" value="ABA06319.1"/>
    <property type="molecule type" value="Genomic_DNA"/>
</dbReference>
<dbReference type="RefSeq" id="WP_011316235.1">
    <property type="nucleotide sequence ID" value="NC_007406.1"/>
</dbReference>
<dbReference type="SMR" id="Q3SN22"/>
<dbReference type="STRING" id="323098.Nwi_3071"/>
<dbReference type="KEGG" id="nwi:Nwi_3071"/>
<dbReference type="eggNOG" id="COG0548">
    <property type="taxonomic scope" value="Bacteria"/>
</dbReference>
<dbReference type="HOGENOM" id="CLU_053680_0_0_5"/>
<dbReference type="OrthoDB" id="9803155at2"/>
<dbReference type="UniPathway" id="UPA00068">
    <property type="reaction ID" value="UER00107"/>
</dbReference>
<dbReference type="Proteomes" id="UP000002531">
    <property type="component" value="Chromosome"/>
</dbReference>
<dbReference type="GO" id="GO:0005737">
    <property type="term" value="C:cytoplasm"/>
    <property type="evidence" value="ECO:0007669"/>
    <property type="project" value="UniProtKB-SubCell"/>
</dbReference>
<dbReference type="GO" id="GO:0003991">
    <property type="term" value="F:acetylglutamate kinase activity"/>
    <property type="evidence" value="ECO:0007669"/>
    <property type="project" value="UniProtKB-UniRule"/>
</dbReference>
<dbReference type="GO" id="GO:0005524">
    <property type="term" value="F:ATP binding"/>
    <property type="evidence" value="ECO:0007669"/>
    <property type="project" value="UniProtKB-UniRule"/>
</dbReference>
<dbReference type="GO" id="GO:0042450">
    <property type="term" value="P:arginine biosynthetic process via ornithine"/>
    <property type="evidence" value="ECO:0007669"/>
    <property type="project" value="UniProtKB-UniRule"/>
</dbReference>
<dbReference type="GO" id="GO:0006526">
    <property type="term" value="P:L-arginine biosynthetic process"/>
    <property type="evidence" value="ECO:0007669"/>
    <property type="project" value="UniProtKB-UniPathway"/>
</dbReference>
<dbReference type="CDD" id="cd04250">
    <property type="entry name" value="AAK_NAGK-C"/>
    <property type="match status" value="1"/>
</dbReference>
<dbReference type="FunFam" id="3.40.1160.10:FF:000004">
    <property type="entry name" value="Acetylglutamate kinase"/>
    <property type="match status" value="1"/>
</dbReference>
<dbReference type="Gene3D" id="3.40.1160.10">
    <property type="entry name" value="Acetylglutamate kinase-like"/>
    <property type="match status" value="1"/>
</dbReference>
<dbReference type="HAMAP" id="MF_00082">
    <property type="entry name" value="ArgB"/>
    <property type="match status" value="1"/>
</dbReference>
<dbReference type="InterPro" id="IPR036393">
    <property type="entry name" value="AceGlu_kinase-like_sf"/>
</dbReference>
<dbReference type="InterPro" id="IPR004662">
    <property type="entry name" value="AcgluKinase_fam"/>
</dbReference>
<dbReference type="InterPro" id="IPR037528">
    <property type="entry name" value="ArgB"/>
</dbReference>
<dbReference type="InterPro" id="IPR001048">
    <property type="entry name" value="Asp/Glu/Uridylate_kinase"/>
</dbReference>
<dbReference type="InterPro" id="IPR041727">
    <property type="entry name" value="NAGK-C"/>
</dbReference>
<dbReference type="NCBIfam" id="TIGR00761">
    <property type="entry name" value="argB"/>
    <property type="match status" value="1"/>
</dbReference>
<dbReference type="PANTHER" id="PTHR23342">
    <property type="entry name" value="N-ACETYLGLUTAMATE SYNTHASE"/>
    <property type="match status" value="1"/>
</dbReference>
<dbReference type="PANTHER" id="PTHR23342:SF0">
    <property type="entry name" value="N-ACETYLGLUTAMATE SYNTHASE, MITOCHONDRIAL"/>
    <property type="match status" value="1"/>
</dbReference>
<dbReference type="Pfam" id="PF00696">
    <property type="entry name" value="AA_kinase"/>
    <property type="match status" value="1"/>
</dbReference>
<dbReference type="PIRSF" id="PIRSF000728">
    <property type="entry name" value="NAGK"/>
    <property type="match status" value="1"/>
</dbReference>
<dbReference type="SUPFAM" id="SSF53633">
    <property type="entry name" value="Carbamate kinase-like"/>
    <property type="match status" value="1"/>
</dbReference>
<reference key="1">
    <citation type="journal article" date="2006" name="Appl. Environ. Microbiol.">
        <title>Genome sequence of the chemolithoautotrophic nitrite-oxidizing bacterium Nitrobacter winogradskyi Nb-255.</title>
        <authorList>
            <person name="Starkenburg S.R."/>
            <person name="Chain P.S.G."/>
            <person name="Sayavedra-Soto L.A."/>
            <person name="Hauser L."/>
            <person name="Land M.L."/>
            <person name="Larimer F.W."/>
            <person name="Malfatti S.A."/>
            <person name="Klotz M.G."/>
            <person name="Bottomley P.J."/>
            <person name="Arp D.J."/>
            <person name="Hickey W.J."/>
        </authorList>
    </citation>
    <scope>NUCLEOTIDE SEQUENCE [LARGE SCALE GENOMIC DNA]</scope>
    <source>
        <strain>ATCC 25391 / DSM 10237 / CIP 104748 / NCIMB 11846 / Nb-255</strain>
    </source>
</reference>
<evidence type="ECO:0000255" key="1">
    <source>
        <dbReference type="HAMAP-Rule" id="MF_00082"/>
    </source>
</evidence>